<comment type="function">
    <text evidence="1">Catalyzes the methylthiolation of an aspartic acid residue of ribosomal protein uS12.</text>
</comment>
<comment type="catalytic activity">
    <reaction evidence="1">
        <text>L-aspartate(89)-[ribosomal protein uS12]-hydrogen + (sulfur carrier)-SH + AH2 + 2 S-adenosyl-L-methionine = 3-methylsulfanyl-L-aspartate(89)-[ribosomal protein uS12]-hydrogen + (sulfur carrier)-H + 5'-deoxyadenosine + L-methionine + A + S-adenosyl-L-homocysteine + 2 H(+)</text>
        <dbReference type="Rhea" id="RHEA:37087"/>
        <dbReference type="Rhea" id="RHEA-COMP:10460"/>
        <dbReference type="Rhea" id="RHEA-COMP:10461"/>
        <dbReference type="Rhea" id="RHEA-COMP:14737"/>
        <dbReference type="Rhea" id="RHEA-COMP:14739"/>
        <dbReference type="ChEBI" id="CHEBI:13193"/>
        <dbReference type="ChEBI" id="CHEBI:15378"/>
        <dbReference type="ChEBI" id="CHEBI:17319"/>
        <dbReference type="ChEBI" id="CHEBI:17499"/>
        <dbReference type="ChEBI" id="CHEBI:29917"/>
        <dbReference type="ChEBI" id="CHEBI:29961"/>
        <dbReference type="ChEBI" id="CHEBI:57844"/>
        <dbReference type="ChEBI" id="CHEBI:57856"/>
        <dbReference type="ChEBI" id="CHEBI:59789"/>
        <dbReference type="ChEBI" id="CHEBI:64428"/>
        <dbReference type="ChEBI" id="CHEBI:73599"/>
        <dbReference type="EC" id="2.8.4.4"/>
    </reaction>
</comment>
<comment type="cofactor">
    <cofactor evidence="1">
        <name>[4Fe-4S] cluster</name>
        <dbReference type="ChEBI" id="CHEBI:49883"/>
    </cofactor>
    <text evidence="1">Binds 2 [4Fe-4S] clusters. One cluster is coordinated with 3 cysteines and an exchangeable S-adenosyl-L-methionine.</text>
</comment>
<comment type="subcellular location">
    <subcellularLocation>
        <location evidence="1">Cytoplasm</location>
    </subcellularLocation>
</comment>
<comment type="similarity">
    <text evidence="1">Belongs to the methylthiotransferase family. RimO subfamily.</text>
</comment>
<gene>
    <name evidence="1" type="primary">rimO</name>
    <name type="ordered locus">CKL_1443</name>
</gene>
<protein>
    <recommendedName>
        <fullName evidence="1">Ribosomal protein uS12 methylthiotransferase RimO</fullName>
        <shortName evidence="1">uS12 MTTase</shortName>
        <shortName evidence="1">uS12 methylthiotransferase</shortName>
        <ecNumber evidence="1">2.8.4.4</ecNumber>
    </recommendedName>
    <alternativeName>
        <fullName evidence="1">Ribosomal protein uS12 (aspartate-C(3))-methylthiotransferase</fullName>
    </alternativeName>
    <alternativeName>
        <fullName evidence="1">Ribosome maturation factor RimO</fullName>
    </alternativeName>
</protein>
<reference key="1">
    <citation type="journal article" date="2008" name="Proc. Natl. Acad. Sci. U.S.A.">
        <title>The genome of Clostridium kluyveri, a strict anaerobe with unique metabolic features.</title>
        <authorList>
            <person name="Seedorf H."/>
            <person name="Fricke W.F."/>
            <person name="Veith B."/>
            <person name="Brueggemann H."/>
            <person name="Liesegang H."/>
            <person name="Strittmatter A."/>
            <person name="Miethke M."/>
            <person name="Buckel W."/>
            <person name="Hinderberger J."/>
            <person name="Li F."/>
            <person name="Hagemeier C."/>
            <person name="Thauer R.K."/>
            <person name="Gottschalk G."/>
        </authorList>
    </citation>
    <scope>NUCLEOTIDE SEQUENCE [LARGE SCALE GENOMIC DNA]</scope>
    <source>
        <strain>ATCC 8527 / DSM 555 / NBRC 12016 / NCIMB 10680 / K1</strain>
    </source>
</reference>
<organism>
    <name type="scientific">Clostridium kluyveri (strain ATCC 8527 / DSM 555 / NBRC 12016 / NCIMB 10680 / K1)</name>
    <dbReference type="NCBI Taxonomy" id="431943"/>
    <lineage>
        <taxon>Bacteria</taxon>
        <taxon>Bacillati</taxon>
        <taxon>Bacillota</taxon>
        <taxon>Clostridia</taxon>
        <taxon>Eubacteriales</taxon>
        <taxon>Clostridiaceae</taxon>
        <taxon>Clostridium</taxon>
    </lineage>
</organism>
<name>RIMO_CLOK5</name>
<dbReference type="EC" id="2.8.4.4" evidence="1"/>
<dbReference type="EMBL" id="CP000673">
    <property type="protein sequence ID" value="EDK33485.1"/>
    <property type="molecule type" value="Genomic_DNA"/>
</dbReference>
<dbReference type="RefSeq" id="WP_012101832.1">
    <property type="nucleotide sequence ID" value="NC_009706.1"/>
</dbReference>
<dbReference type="SMR" id="A5N854"/>
<dbReference type="STRING" id="431943.CKL_1443"/>
<dbReference type="KEGG" id="ckl:CKL_1443"/>
<dbReference type="eggNOG" id="COG0621">
    <property type="taxonomic scope" value="Bacteria"/>
</dbReference>
<dbReference type="HOGENOM" id="CLU_018697_0_1_9"/>
<dbReference type="Proteomes" id="UP000002411">
    <property type="component" value="Chromosome"/>
</dbReference>
<dbReference type="GO" id="GO:0005829">
    <property type="term" value="C:cytosol"/>
    <property type="evidence" value="ECO:0007669"/>
    <property type="project" value="TreeGrafter"/>
</dbReference>
<dbReference type="GO" id="GO:0051539">
    <property type="term" value="F:4 iron, 4 sulfur cluster binding"/>
    <property type="evidence" value="ECO:0007669"/>
    <property type="project" value="UniProtKB-UniRule"/>
</dbReference>
<dbReference type="GO" id="GO:0035599">
    <property type="term" value="F:aspartic acid methylthiotransferase activity"/>
    <property type="evidence" value="ECO:0007669"/>
    <property type="project" value="TreeGrafter"/>
</dbReference>
<dbReference type="GO" id="GO:0046872">
    <property type="term" value="F:metal ion binding"/>
    <property type="evidence" value="ECO:0007669"/>
    <property type="project" value="UniProtKB-KW"/>
</dbReference>
<dbReference type="GO" id="GO:0103039">
    <property type="term" value="F:protein methylthiotransferase activity"/>
    <property type="evidence" value="ECO:0007669"/>
    <property type="project" value="UniProtKB-EC"/>
</dbReference>
<dbReference type="GO" id="GO:0006400">
    <property type="term" value="P:tRNA modification"/>
    <property type="evidence" value="ECO:0007669"/>
    <property type="project" value="InterPro"/>
</dbReference>
<dbReference type="CDD" id="cd01335">
    <property type="entry name" value="Radical_SAM"/>
    <property type="match status" value="1"/>
</dbReference>
<dbReference type="FunFam" id="2.40.50.140:FF:000210">
    <property type="entry name" value="Ribosomal protein S12 methylthiotransferase RimO"/>
    <property type="match status" value="1"/>
</dbReference>
<dbReference type="FunFam" id="3.80.30.20:FF:000001">
    <property type="entry name" value="tRNA-2-methylthio-N(6)-dimethylallyladenosine synthase 2"/>
    <property type="match status" value="1"/>
</dbReference>
<dbReference type="Gene3D" id="3.40.50.12160">
    <property type="entry name" value="Methylthiotransferase, N-terminal domain"/>
    <property type="match status" value="1"/>
</dbReference>
<dbReference type="Gene3D" id="2.40.50.140">
    <property type="entry name" value="Nucleic acid-binding proteins"/>
    <property type="match status" value="1"/>
</dbReference>
<dbReference type="Gene3D" id="3.80.30.20">
    <property type="entry name" value="tm_1862 like domain"/>
    <property type="match status" value="1"/>
</dbReference>
<dbReference type="HAMAP" id="MF_01865">
    <property type="entry name" value="MTTase_RimO"/>
    <property type="match status" value="1"/>
</dbReference>
<dbReference type="InterPro" id="IPR006638">
    <property type="entry name" value="Elp3/MiaA/NifB-like_rSAM"/>
</dbReference>
<dbReference type="InterPro" id="IPR005839">
    <property type="entry name" value="Methylthiotransferase"/>
</dbReference>
<dbReference type="InterPro" id="IPR020612">
    <property type="entry name" value="Methylthiotransferase_CS"/>
</dbReference>
<dbReference type="InterPro" id="IPR013848">
    <property type="entry name" value="Methylthiotransferase_N"/>
</dbReference>
<dbReference type="InterPro" id="IPR038135">
    <property type="entry name" value="Methylthiotransferase_N_sf"/>
</dbReference>
<dbReference type="InterPro" id="IPR012340">
    <property type="entry name" value="NA-bd_OB-fold"/>
</dbReference>
<dbReference type="InterPro" id="IPR005840">
    <property type="entry name" value="Ribosomal_uS12_MeSTrfase_RimO"/>
</dbReference>
<dbReference type="InterPro" id="IPR007197">
    <property type="entry name" value="rSAM"/>
</dbReference>
<dbReference type="InterPro" id="IPR023404">
    <property type="entry name" value="rSAM_horseshoe"/>
</dbReference>
<dbReference type="InterPro" id="IPR002792">
    <property type="entry name" value="TRAM_dom"/>
</dbReference>
<dbReference type="NCBIfam" id="TIGR01125">
    <property type="entry name" value="30S ribosomal protein S12 methylthiotransferase RimO"/>
    <property type="match status" value="1"/>
</dbReference>
<dbReference type="NCBIfam" id="TIGR00089">
    <property type="entry name" value="MiaB/RimO family radical SAM methylthiotransferase"/>
    <property type="match status" value="1"/>
</dbReference>
<dbReference type="PANTHER" id="PTHR43837">
    <property type="entry name" value="RIBOSOMAL PROTEIN S12 METHYLTHIOTRANSFERASE RIMO"/>
    <property type="match status" value="1"/>
</dbReference>
<dbReference type="PANTHER" id="PTHR43837:SF1">
    <property type="entry name" value="RIBOSOMAL PROTEIN US12 METHYLTHIOTRANSFERASE RIMO"/>
    <property type="match status" value="1"/>
</dbReference>
<dbReference type="Pfam" id="PF04055">
    <property type="entry name" value="Radical_SAM"/>
    <property type="match status" value="1"/>
</dbReference>
<dbReference type="Pfam" id="PF18693">
    <property type="entry name" value="TRAM_2"/>
    <property type="match status" value="1"/>
</dbReference>
<dbReference type="Pfam" id="PF00919">
    <property type="entry name" value="UPF0004"/>
    <property type="match status" value="1"/>
</dbReference>
<dbReference type="SFLD" id="SFLDG01082">
    <property type="entry name" value="B12-binding_domain_containing"/>
    <property type="match status" value="1"/>
</dbReference>
<dbReference type="SFLD" id="SFLDG01061">
    <property type="entry name" value="methylthiotransferase"/>
    <property type="match status" value="1"/>
</dbReference>
<dbReference type="SFLD" id="SFLDF00274">
    <property type="entry name" value="ribosomal_protein_S12_methylth"/>
    <property type="match status" value="1"/>
</dbReference>
<dbReference type="SMART" id="SM00729">
    <property type="entry name" value="Elp3"/>
    <property type="match status" value="1"/>
</dbReference>
<dbReference type="SUPFAM" id="SSF102114">
    <property type="entry name" value="Radical SAM enzymes"/>
    <property type="match status" value="1"/>
</dbReference>
<dbReference type="PROSITE" id="PS51449">
    <property type="entry name" value="MTTASE_N"/>
    <property type="match status" value="1"/>
</dbReference>
<dbReference type="PROSITE" id="PS01278">
    <property type="entry name" value="MTTASE_RADICAL"/>
    <property type="match status" value="1"/>
</dbReference>
<dbReference type="PROSITE" id="PS51918">
    <property type="entry name" value="RADICAL_SAM"/>
    <property type="match status" value="1"/>
</dbReference>
<dbReference type="PROSITE" id="PS50926">
    <property type="entry name" value="TRAM"/>
    <property type="match status" value="1"/>
</dbReference>
<proteinExistence type="inferred from homology"/>
<sequence>MDKLKVGLISLGCDKNRVDSEIILGNVKSAYEIVTDPKLADFIIINTCGFIESAKQESIDTILEMSQYKGKYNCRGIVVTGCLAQRYGIELMELLPEIDIMLGVNDYDKLVENINNFISDKQNKIHNCGYSDLNINEGKRILTTKSHTAYLRIAEGCDNYCTYCIIPKIRGKYRSRSIENILQECNELSLRGVKEVILIAQDTTRYGIDLYNKKMLPELMRSISKIEGIEWIRLLYCYPEEITEDIIDEIALNDKVCNYIDIPLQHISDNILKLMGRRGRKKDILRNINELRKKINDISIRTTIIVGFPGESEEDFKELKNFIENIKFDNLGVFKYSREEGTRAYKMKDQVSEELKTAREGELMMLQKHIIYSMQKYKIGNKYKVLVEGKKEGVWYGRNYAMAPDIDGVIYIKSKKELKVGTMIDVKITNSVEYDLVGVVYDESGK</sequence>
<evidence type="ECO:0000255" key="1">
    <source>
        <dbReference type="HAMAP-Rule" id="MF_01865"/>
    </source>
</evidence>
<evidence type="ECO:0000255" key="2">
    <source>
        <dbReference type="PROSITE-ProRule" id="PRU01266"/>
    </source>
</evidence>
<accession>A5N854</accession>
<feature type="chain" id="PRO_0000374784" description="Ribosomal protein uS12 methylthiotransferase RimO">
    <location>
        <begin position="1"/>
        <end position="446"/>
    </location>
</feature>
<feature type="domain" description="MTTase N-terminal" evidence="1">
    <location>
        <begin position="4"/>
        <end position="119"/>
    </location>
</feature>
<feature type="domain" description="Radical SAM core" evidence="2">
    <location>
        <begin position="143"/>
        <end position="373"/>
    </location>
</feature>
<feature type="domain" description="TRAM" evidence="1">
    <location>
        <begin position="376"/>
        <end position="442"/>
    </location>
</feature>
<feature type="binding site" evidence="1">
    <location>
        <position position="13"/>
    </location>
    <ligand>
        <name>[4Fe-4S] cluster</name>
        <dbReference type="ChEBI" id="CHEBI:49883"/>
        <label>1</label>
    </ligand>
</feature>
<feature type="binding site" evidence="1">
    <location>
        <position position="48"/>
    </location>
    <ligand>
        <name>[4Fe-4S] cluster</name>
        <dbReference type="ChEBI" id="CHEBI:49883"/>
        <label>1</label>
    </ligand>
</feature>
<feature type="binding site" evidence="1">
    <location>
        <position position="82"/>
    </location>
    <ligand>
        <name>[4Fe-4S] cluster</name>
        <dbReference type="ChEBI" id="CHEBI:49883"/>
        <label>1</label>
    </ligand>
</feature>
<feature type="binding site" evidence="1">
    <location>
        <position position="157"/>
    </location>
    <ligand>
        <name>[4Fe-4S] cluster</name>
        <dbReference type="ChEBI" id="CHEBI:49883"/>
        <label>2</label>
        <note>4Fe-4S-S-AdoMet</note>
    </ligand>
</feature>
<feature type="binding site" evidence="1">
    <location>
        <position position="161"/>
    </location>
    <ligand>
        <name>[4Fe-4S] cluster</name>
        <dbReference type="ChEBI" id="CHEBI:49883"/>
        <label>2</label>
        <note>4Fe-4S-S-AdoMet</note>
    </ligand>
</feature>
<feature type="binding site" evidence="1">
    <location>
        <position position="164"/>
    </location>
    <ligand>
        <name>[4Fe-4S] cluster</name>
        <dbReference type="ChEBI" id="CHEBI:49883"/>
        <label>2</label>
        <note>4Fe-4S-S-AdoMet</note>
    </ligand>
</feature>
<keyword id="KW-0004">4Fe-4S</keyword>
<keyword id="KW-0963">Cytoplasm</keyword>
<keyword id="KW-0408">Iron</keyword>
<keyword id="KW-0411">Iron-sulfur</keyword>
<keyword id="KW-0479">Metal-binding</keyword>
<keyword id="KW-1185">Reference proteome</keyword>
<keyword id="KW-0949">S-adenosyl-L-methionine</keyword>
<keyword id="KW-0808">Transferase</keyword>